<sequence>MNARIDIGNEAFSAAELATAESRASATPMMEQYIEIKANNPGSLLFYRMGDFYELFFEDALEASRALGITLTKRGQHMGQDIPMCGVPVHAADDYLQKLISLGFRVAVCEQIEDPAQAKKRGAKSVVKRDVIRLVTPGTITEEKLLSPSESNYLMALARIRGGAEPQLALAWIDISTGVFRLAETESSRLLADILRIDPRELILPDTIFHDAELKPVFDVLGRTAVPQPSVLFDSASAEGRIARYFGVSTLDGFGSFSRAELAAAAAAVAYVEKTQIAERPPLGKPERESAASTLFIDPATRANLELARTLSGDRNGSLLKAIDRTVTGGGARLLAERLMSPLTDPARINARLDSIGFLIEEPSLCGKLRDTLKHVPDMPRALSRLALDRGGPRDLWAIRQGLQAAGGLADLLASAMLPEELDQALSGLQALPAGLETLLAETLADELPLLKRDGGFLRDGASAELDEVRALRDQSRRVIAGLQLQYAEETGIRSLKIKHNNILGYFIEVTAGNAAPMTETSEAKSRFIHRQTMASAMRFTTTELADLESRIANAADRALTIELEAFDRMTAAVVAQAESIKSGARALAVIDVAAGLALLAEEQAYCRPQVDGSKMFAIEGGRHPVVEQALRRQAGGPFVANNCDLSPKTGDKDGAIWLLTGPNMGGKSTFLRQNALIAIMAQMGSFVPATSAHIGIVDRLFSRVGASDDLARGRSTFMVEMVETAAILNQASDRSLVILDEIGRGTATFDGLSIAWAAVEHLHEANRCRGLFATHFHELTVLSEKLGRLSNATMRVKEWDGDVIFLHEVGPGAADRSYGIQVARLAGLPASVVARARDVLTRLEDADRKNPASQLIDDLPLFQVAVRREDAARGPSKVEEALRAMSLDDMTPREAMDALYDLKKKLK</sequence>
<name>MUTS_RHIEC</name>
<dbReference type="EMBL" id="CP000133">
    <property type="protein sequence ID" value="ABC89210.1"/>
    <property type="molecule type" value="Genomic_DNA"/>
</dbReference>
<dbReference type="RefSeq" id="WP_011423770.1">
    <property type="nucleotide sequence ID" value="NC_007761.1"/>
</dbReference>
<dbReference type="SMR" id="Q2KD76"/>
<dbReference type="KEGG" id="ret:RHE_CH00388"/>
<dbReference type="eggNOG" id="COG0249">
    <property type="taxonomic scope" value="Bacteria"/>
</dbReference>
<dbReference type="HOGENOM" id="CLU_002472_4_0_5"/>
<dbReference type="OrthoDB" id="9802448at2"/>
<dbReference type="Proteomes" id="UP000001936">
    <property type="component" value="Chromosome"/>
</dbReference>
<dbReference type="GO" id="GO:0005829">
    <property type="term" value="C:cytosol"/>
    <property type="evidence" value="ECO:0007669"/>
    <property type="project" value="TreeGrafter"/>
</dbReference>
<dbReference type="GO" id="GO:0005524">
    <property type="term" value="F:ATP binding"/>
    <property type="evidence" value="ECO:0007669"/>
    <property type="project" value="UniProtKB-UniRule"/>
</dbReference>
<dbReference type="GO" id="GO:0140664">
    <property type="term" value="F:ATP-dependent DNA damage sensor activity"/>
    <property type="evidence" value="ECO:0007669"/>
    <property type="project" value="InterPro"/>
</dbReference>
<dbReference type="GO" id="GO:0003684">
    <property type="term" value="F:damaged DNA binding"/>
    <property type="evidence" value="ECO:0007669"/>
    <property type="project" value="UniProtKB-UniRule"/>
</dbReference>
<dbReference type="GO" id="GO:0030983">
    <property type="term" value="F:mismatched DNA binding"/>
    <property type="evidence" value="ECO:0007669"/>
    <property type="project" value="InterPro"/>
</dbReference>
<dbReference type="GO" id="GO:0006298">
    <property type="term" value="P:mismatch repair"/>
    <property type="evidence" value="ECO:0007669"/>
    <property type="project" value="UniProtKB-UniRule"/>
</dbReference>
<dbReference type="CDD" id="cd03284">
    <property type="entry name" value="ABC_MutS1"/>
    <property type="match status" value="1"/>
</dbReference>
<dbReference type="FunFam" id="3.40.1170.10:FF:000001">
    <property type="entry name" value="DNA mismatch repair protein MutS"/>
    <property type="match status" value="1"/>
</dbReference>
<dbReference type="FunFam" id="3.40.50.300:FF:000870">
    <property type="entry name" value="MutS protein homolog 4"/>
    <property type="match status" value="1"/>
</dbReference>
<dbReference type="Gene3D" id="1.10.1420.10">
    <property type="match status" value="2"/>
</dbReference>
<dbReference type="Gene3D" id="6.10.140.430">
    <property type="match status" value="1"/>
</dbReference>
<dbReference type="Gene3D" id="3.40.1170.10">
    <property type="entry name" value="DNA repair protein MutS, domain I"/>
    <property type="match status" value="1"/>
</dbReference>
<dbReference type="Gene3D" id="3.30.420.110">
    <property type="entry name" value="MutS, connector domain"/>
    <property type="match status" value="1"/>
</dbReference>
<dbReference type="Gene3D" id="3.40.50.300">
    <property type="entry name" value="P-loop containing nucleotide triphosphate hydrolases"/>
    <property type="match status" value="1"/>
</dbReference>
<dbReference type="HAMAP" id="MF_00096">
    <property type="entry name" value="MutS"/>
    <property type="match status" value="1"/>
</dbReference>
<dbReference type="InterPro" id="IPR005748">
    <property type="entry name" value="DNA_mismatch_repair_MutS"/>
</dbReference>
<dbReference type="InterPro" id="IPR007695">
    <property type="entry name" value="DNA_mismatch_repair_MutS-lik_N"/>
</dbReference>
<dbReference type="InterPro" id="IPR017261">
    <property type="entry name" value="DNA_mismatch_repair_MutS/MSH"/>
</dbReference>
<dbReference type="InterPro" id="IPR000432">
    <property type="entry name" value="DNA_mismatch_repair_MutS_C"/>
</dbReference>
<dbReference type="InterPro" id="IPR007861">
    <property type="entry name" value="DNA_mismatch_repair_MutS_clamp"/>
</dbReference>
<dbReference type="InterPro" id="IPR007696">
    <property type="entry name" value="DNA_mismatch_repair_MutS_core"/>
</dbReference>
<dbReference type="InterPro" id="IPR016151">
    <property type="entry name" value="DNA_mismatch_repair_MutS_N"/>
</dbReference>
<dbReference type="InterPro" id="IPR036187">
    <property type="entry name" value="DNA_mismatch_repair_MutS_sf"/>
</dbReference>
<dbReference type="InterPro" id="IPR007860">
    <property type="entry name" value="DNA_mmatch_repair_MutS_con_dom"/>
</dbReference>
<dbReference type="InterPro" id="IPR045076">
    <property type="entry name" value="MutS"/>
</dbReference>
<dbReference type="InterPro" id="IPR036678">
    <property type="entry name" value="MutS_con_dom_sf"/>
</dbReference>
<dbReference type="InterPro" id="IPR027417">
    <property type="entry name" value="P-loop_NTPase"/>
</dbReference>
<dbReference type="NCBIfam" id="TIGR01070">
    <property type="entry name" value="mutS1"/>
    <property type="match status" value="1"/>
</dbReference>
<dbReference type="NCBIfam" id="NF003810">
    <property type="entry name" value="PRK05399.1"/>
    <property type="match status" value="1"/>
</dbReference>
<dbReference type="PANTHER" id="PTHR11361:SF34">
    <property type="entry name" value="DNA MISMATCH REPAIR PROTEIN MSH1, MITOCHONDRIAL"/>
    <property type="match status" value="1"/>
</dbReference>
<dbReference type="PANTHER" id="PTHR11361">
    <property type="entry name" value="DNA MISMATCH REPAIR PROTEIN MUTS FAMILY MEMBER"/>
    <property type="match status" value="1"/>
</dbReference>
<dbReference type="Pfam" id="PF01624">
    <property type="entry name" value="MutS_I"/>
    <property type="match status" value="1"/>
</dbReference>
<dbReference type="Pfam" id="PF05188">
    <property type="entry name" value="MutS_II"/>
    <property type="match status" value="1"/>
</dbReference>
<dbReference type="Pfam" id="PF05192">
    <property type="entry name" value="MutS_III"/>
    <property type="match status" value="1"/>
</dbReference>
<dbReference type="Pfam" id="PF05190">
    <property type="entry name" value="MutS_IV"/>
    <property type="match status" value="1"/>
</dbReference>
<dbReference type="Pfam" id="PF00488">
    <property type="entry name" value="MutS_V"/>
    <property type="match status" value="1"/>
</dbReference>
<dbReference type="PIRSF" id="PIRSF037677">
    <property type="entry name" value="DNA_mis_repair_Msh6"/>
    <property type="match status" value="1"/>
</dbReference>
<dbReference type="SMART" id="SM00534">
    <property type="entry name" value="MUTSac"/>
    <property type="match status" value="1"/>
</dbReference>
<dbReference type="SMART" id="SM00533">
    <property type="entry name" value="MUTSd"/>
    <property type="match status" value="1"/>
</dbReference>
<dbReference type="SUPFAM" id="SSF55271">
    <property type="entry name" value="DNA repair protein MutS, domain I"/>
    <property type="match status" value="1"/>
</dbReference>
<dbReference type="SUPFAM" id="SSF53150">
    <property type="entry name" value="DNA repair protein MutS, domain II"/>
    <property type="match status" value="1"/>
</dbReference>
<dbReference type="SUPFAM" id="SSF48334">
    <property type="entry name" value="DNA repair protein MutS, domain III"/>
    <property type="match status" value="1"/>
</dbReference>
<dbReference type="SUPFAM" id="SSF52540">
    <property type="entry name" value="P-loop containing nucleoside triphosphate hydrolases"/>
    <property type="match status" value="1"/>
</dbReference>
<dbReference type="PROSITE" id="PS00486">
    <property type="entry name" value="DNA_MISMATCH_REPAIR_2"/>
    <property type="match status" value="1"/>
</dbReference>
<gene>
    <name evidence="1" type="primary">mutS</name>
    <name type="ordered locus">RHE_CH00388</name>
</gene>
<feature type="chain" id="PRO_0000335210" description="DNA mismatch repair protein MutS">
    <location>
        <begin position="1"/>
        <end position="908"/>
    </location>
</feature>
<feature type="binding site" evidence="1">
    <location>
        <begin position="662"/>
        <end position="669"/>
    </location>
    <ligand>
        <name>ATP</name>
        <dbReference type="ChEBI" id="CHEBI:30616"/>
    </ligand>
</feature>
<protein>
    <recommendedName>
        <fullName evidence="1">DNA mismatch repair protein MutS</fullName>
    </recommendedName>
</protein>
<comment type="function">
    <text evidence="1">This protein is involved in the repair of mismatches in DNA. It is possible that it carries out the mismatch recognition step. This protein has a weak ATPase activity.</text>
</comment>
<comment type="similarity">
    <text evidence="1">Belongs to the DNA mismatch repair MutS family.</text>
</comment>
<reference key="1">
    <citation type="journal article" date="2006" name="Proc. Natl. Acad. Sci. U.S.A.">
        <title>The partitioned Rhizobium etli genome: genetic and metabolic redundancy in seven interacting replicons.</title>
        <authorList>
            <person name="Gonzalez V."/>
            <person name="Santamaria R.I."/>
            <person name="Bustos P."/>
            <person name="Hernandez-Gonzalez I."/>
            <person name="Medrano-Soto A."/>
            <person name="Moreno-Hagelsieb G."/>
            <person name="Janga S.C."/>
            <person name="Ramirez M.A."/>
            <person name="Jimenez-Jacinto V."/>
            <person name="Collado-Vides J."/>
            <person name="Davila G."/>
        </authorList>
    </citation>
    <scope>NUCLEOTIDE SEQUENCE [LARGE SCALE GENOMIC DNA]</scope>
    <source>
        <strain>ATCC 51251 / DSM 11541 / JCM 21823 / NBRC 15573 / CFN 42</strain>
    </source>
</reference>
<organism>
    <name type="scientific">Rhizobium etli (strain ATCC 51251 / DSM 11541 / JCM 21823 / NBRC 15573 / CFN 42)</name>
    <dbReference type="NCBI Taxonomy" id="347834"/>
    <lineage>
        <taxon>Bacteria</taxon>
        <taxon>Pseudomonadati</taxon>
        <taxon>Pseudomonadota</taxon>
        <taxon>Alphaproteobacteria</taxon>
        <taxon>Hyphomicrobiales</taxon>
        <taxon>Rhizobiaceae</taxon>
        <taxon>Rhizobium/Agrobacterium group</taxon>
        <taxon>Rhizobium</taxon>
    </lineage>
</organism>
<evidence type="ECO:0000255" key="1">
    <source>
        <dbReference type="HAMAP-Rule" id="MF_00096"/>
    </source>
</evidence>
<keyword id="KW-0067">ATP-binding</keyword>
<keyword id="KW-0227">DNA damage</keyword>
<keyword id="KW-0234">DNA repair</keyword>
<keyword id="KW-0238">DNA-binding</keyword>
<keyword id="KW-0547">Nucleotide-binding</keyword>
<keyword id="KW-1185">Reference proteome</keyword>
<accession>Q2KD76</accession>
<proteinExistence type="inferred from homology"/>